<protein>
    <recommendedName>
        <fullName evidence="1">Small ribosomal subunit protein bS18c</fullName>
    </recommendedName>
    <alternativeName>
        <fullName evidence="2">30S ribosomal protein S18, chloroplastic</fullName>
    </alternativeName>
</protein>
<name>RR18_LAROX</name>
<evidence type="ECO:0000255" key="1">
    <source>
        <dbReference type="HAMAP-Rule" id="MF_00270"/>
    </source>
</evidence>
<evidence type="ECO:0000305" key="2"/>
<sequence>MKQTMDKPKRSFRRHLTPIRRHLSPIGSGDRIDYKNMSLISRFISEQGKILSGRVNRLTSKQQRLMTNAIKRARILSLLPFLYNEN</sequence>
<feature type="chain" id="PRO_0000111290" description="Small ribosomal subunit protein bS18c">
    <location>
        <begin position="1"/>
        <end position="86"/>
    </location>
</feature>
<proteinExistence type="inferred from homology"/>
<keyword id="KW-0150">Chloroplast</keyword>
<keyword id="KW-0934">Plastid</keyword>
<keyword id="KW-0687">Ribonucleoprotein</keyword>
<keyword id="KW-0689">Ribosomal protein</keyword>
<keyword id="KW-0694">RNA-binding</keyword>
<keyword id="KW-0699">rRNA-binding</keyword>
<gene>
    <name evidence="1" type="primary">rps18</name>
</gene>
<geneLocation type="chloroplast"/>
<reference key="1">
    <citation type="journal article" date="2003" name="Mol. Phylogenet. Evol.">
        <title>Conflicting phylogenies of Larix (Pinaceae) based on cytoplasmic and nuclear DNA.</title>
        <authorList>
            <person name="Semerikov V.L."/>
            <person name="Zhang H."/>
            <person name="Sun M."/>
            <person name="Lascoux M."/>
        </authorList>
    </citation>
    <scope>NUCLEOTIDE SEQUENCE [GENOMIC DNA]</scope>
</reference>
<dbReference type="EMBL" id="AY131249">
    <property type="protein sequence ID" value="AAN18239.1"/>
    <property type="molecule type" value="Genomic_DNA"/>
</dbReference>
<dbReference type="RefSeq" id="YP_009522198.1">
    <property type="nucleotide sequence ID" value="NC_039583.1"/>
</dbReference>
<dbReference type="SMR" id="Q85UZ5"/>
<dbReference type="GeneID" id="38283989"/>
<dbReference type="GO" id="GO:0009507">
    <property type="term" value="C:chloroplast"/>
    <property type="evidence" value="ECO:0007669"/>
    <property type="project" value="UniProtKB-SubCell"/>
</dbReference>
<dbReference type="GO" id="GO:0005763">
    <property type="term" value="C:mitochondrial small ribosomal subunit"/>
    <property type="evidence" value="ECO:0007669"/>
    <property type="project" value="TreeGrafter"/>
</dbReference>
<dbReference type="GO" id="GO:0070181">
    <property type="term" value="F:small ribosomal subunit rRNA binding"/>
    <property type="evidence" value="ECO:0007669"/>
    <property type="project" value="TreeGrafter"/>
</dbReference>
<dbReference type="GO" id="GO:0003735">
    <property type="term" value="F:structural constituent of ribosome"/>
    <property type="evidence" value="ECO:0007669"/>
    <property type="project" value="InterPro"/>
</dbReference>
<dbReference type="GO" id="GO:0006412">
    <property type="term" value="P:translation"/>
    <property type="evidence" value="ECO:0007669"/>
    <property type="project" value="UniProtKB-UniRule"/>
</dbReference>
<dbReference type="FunFam" id="4.10.640.10:FF:000002">
    <property type="entry name" value="30S ribosomal protein S18, chloroplastic"/>
    <property type="match status" value="1"/>
</dbReference>
<dbReference type="Gene3D" id="4.10.640.10">
    <property type="entry name" value="Ribosomal protein S18"/>
    <property type="match status" value="1"/>
</dbReference>
<dbReference type="HAMAP" id="MF_00270">
    <property type="entry name" value="Ribosomal_bS18"/>
    <property type="match status" value="1"/>
</dbReference>
<dbReference type="InterPro" id="IPR001648">
    <property type="entry name" value="Ribosomal_bS18"/>
</dbReference>
<dbReference type="InterPro" id="IPR018275">
    <property type="entry name" value="Ribosomal_bS18_CS"/>
</dbReference>
<dbReference type="InterPro" id="IPR036870">
    <property type="entry name" value="Ribosomal_bS18_sf"/>
</dbReference>
<dbReference type="NCBIfam" id="TIGR00165">
    <property type="entry name" value="S18"/>
    <property type="match status" value="1"/>
</dbReference>
<dbReference type="PANTHER" id="PTHR13479">
    <property type="entry name" value="30S RIBOSOMAL PROTEIN S18"/>
    <property type="match status" value="1"/>
</dbReference>
<dbReference type="PANTHER" id="PTHR13479:SF40">
    <property type="entry name" value="SMALL RIBOSOMAL SUBUNIT PROTEIN BS18M"/>
    <property type="match status" value="1"/>
</dbReference>
<dbReference type="Pfam" id="PF01084">
    <property type="entry name" value="Ribosomal_S18"/>
    <property type="match status" value="1"/>
</dbReference>
<dbReference type="PRINTS" id="PR00974">
    <property type="entry name" value="RIBOSOMALS18"/>
</dbReference>
<dbReference type="SUPFAM" id="SSF46911">
    <property type="entry name" value="Ribosomal protein S18"/>
    <property type="match status" value="1"/>
</dbReference>
<dbReference type="PROSITE" id="PS00057">
    <property type="entry name" value="RIBOSOMAL_S18"/>
    <property type="match status" value="1"/>
</dbReference>
<accession>Q85UZ5</accession>
<comment type="subunit">
    <text>Part of the 30S ribosomal subunit.</text>
</comment>
<comment type="subcellular location">
    <subcellularLocation>
        <location>Plastid</location>
        <location>Chloroplast</location>
    </subcellularLocation>
</comment>
<comment type="similarity">
    <text evidence="1">Belongs to the bacterial ribosomal protein bS18 family.</text>
</comment>
<organism>
    <name type="scientific">Larix occidentalis</name>
    <name type="common">Western larch</name>
    <dbReference type="NCBI Taxonomy" id="3327"/>
    <lineage>
        <taxon>Eukaryota</taxon>
        <taxon>Viridiplantae</taxon>
        <taxon>Streptophyta</taxon>
        <taxon>Embryophyta</taxon>
        <taxon>Tracheophyta</taxon>
        <taxon>Spermatophyta</taxon>
        <taxon>Pinopsida</taxon>
        <taxon>Pinidae</taxon>
        <taxon>Conifers I</taxon>
        <taxon>Pinales</taxon>
        <taxon>Pinaceae</taxon>
        <taxon>Larix</taxon>
    </lineage>
</organism>